<comment type="similarity">
    <text evidence="1">To the N-terminal region of phage HK97/HK620 Gp37/hpaH.</text>
</comment>
<protein>
    <recommendedName>
        <fullName>Uncharacterized protein YfdS</fullName>
    </recommendedName>
</protein>
<evidence type="ECO:0000305" key="1"/>
<accession>P76515</accession>
<accession>Q2MAK5</accession>
<sequence length="120" mass="13672">MRMNVFEMEGFLRGKCVPRDLKVNETNAEYLVRKFDALEAKCAALENKIIPVSAELPPANESVLLFDANGEGWLIGWRSLWYTWGQKETGEWQWTFQVGDLENVNITHWAVMPKAPEAGA</sequence>
<name>YFDS_ECOLI</name>
<gene>
    <name type="primary">yfdS</name>
    <name type="ordered locus">b2362</name>
    <name type="ordered locus">JW2359</name>
</gene>
<feature type="chain" id="PRO_0000169212" description="Uncharacterized protein YfdS">
    <location>
        <begin position="1"/>
        <end position="120"/>
    </location>
</feature>
<keyword id="KW-1185">Reference proteome</keyword>
<reference key="1">
    <citation type="journal article" date="1997" name="Science">
        <title>The complete genome sequence of Escherichia coli K-12.</title>
        <authorList>
            <person name="Blattner F.R."/>
            <person name="Plunkett G. III"/>
            <person name="Bloch C.A."/>
            <person name="Perna N.T."/>
            <person name="Burland V."/>
            <person name="Riley M."/>
            <person name="Collado-Vides J."/>
            <person name="Glasner J.D."/>
            <person name="Rode C.K."/>
            <person name="Mayhew G.F."/>
            <person name="Gregor J."/>
            <person name="Davis N.W."/>
            <person name="Kirkpatrick H.A."/>
            <person name="Goeden M.A."/>
            <person name="Rose D.J."/>
            <person name="Mau B."/>
            <person name="Shao Y."/>
        </authorList>
    </citation>
    <scope>NUCLEOTIDE SEQUENCE [LARGE SCALE GENOMIC DNA]</scope>
    <source>
        <strain>K12 / MG1655 / ATCC 47076</strain>
    </source>
</reference>
<reference key="2">
    <citation type="journal article" date="2006" name="Mol. Syst. Biol.">
        <title>Highly accurate genome sequences of Escherichia coli K-12 strains MG1655 and W3110.</title>
        <authorList>
            <person name="Hayashi K."/>
            <person name="Morooka N."/>
            <person name="Yamamoto Y."/>
            <person name="Fujita K."/>
            <person name="Isono K."/>
            <person name="Choi S."/>
            <person name="Ohtsubo E."/>
            <person name="Baba T."/>
            <person name="Wanner B.L."/>
            <person name="Mori H."/>
            <person name="Horiuchi T."/>
        </authorList>
    </citation>
    <scope>NUCLEOTIDE SEQUENCE [LARGE SCALE GENOMIC DNA]</scope>
    <source>
        <strain>K12 / W3110 / ATCC 27325 / DSM 5911</strain>
    </source>
</reference>
<proteinExistence type="predicted"/>
<organism>
    <name type="scientific">Escherichia coli (strain K12)</name>
    <dbReference type="NCBI Taxonomy" id="83333"/>
    <lineage>
        <taxon>Bacteria</taxon>
        <taxon>Pseudomonadati</taxon>
        <taxon>Pseudomonadota</taxon>
        <taxon>Gammaproteobacteria</taxon>
        <taxon>Enterobacterales</taxon>
        <taxon>Enterobacteriaceae</taxon>
        <taxon>Escherichia</taxon>
    </lineage>
</organism>
<dbReference type="EMBL" id="U00096">
    <property type="protein sequence ID" value="AAC75421.1"/>
    <property type="molecule type" value="Genomic_DNA"/>
</dbReference>
<dbReference type="EMBL" id="AP009048">
    <property type="protein sequence ID" value="BAE76701.1"/>
    <property type="molecule type" value="Genomic_DNA"/>
</dbReference>
<dbReference type="PIR" id="G65009">
    <property type="entry name" value="G65009"/>
</dbReference>
<dbReference type="RefSeq" id="NP_416863.1">
    <property type="nucleotide sequence ID" value="NC_000913.3"/>
</dbReference>
<dbReference type="RefSeq" id="WP_001242717.1">
    <property type="nucleotide sequence ID" value="NZ_LN832404.1"/>
</dbReference>
<dbReference type="SMR" id="P76515"/>
<dbReference type="BioGRID" id="4259503">
    <property type="interactions" value="40"/>
</dbReference>
<dbReference type="FunCoup" id="P76515">
    <property type="interactions" value="106"/>
</dbReference>
<dbReference type="IntAct" id="P76515">
    <property type="interactions" value="13"/>
</dbReference>
<dbReference type="STRING" id="511145.b2362"/>
<dbReference type="PaxDb" id="511145-b2362"/>
<dbReference type="EnsemblBacteria" id="AAC75421">
    <property type="protein sequence ID" value="AAC75421"/>
    <property type="gene ID" value="b2362"/>
</dbReference>
<dbReference type="GeneID" id="946426"/>
<dbReference type="KEGG" id="ecj:JW2359"/>
<dbReference type="KEGG" id="eco:b2362"/>
<dbReference type="KEGG" id="ecoc:C3026_13135"/>
<dbReference type="PATRIC" id="fig|511145.12.peg.2459"/>
<dbReference type="EchoBASE" id="EB3893"/>
<dbReference type="eggNOG" id="ENOG5032Y8K">
    <property type="taxonomic scope" value="Bacteria"/>
</dbReference>
<dbReference type="HOGENOM" id="CLU_162707_1_0_6"/>
<dbReference type="InParanoid" id="P76515"/>
<dbReference type="OMA" id="FNITHWA"/>
<dbReference type="OrthoDB" id="6573166at2"/>
<dbReference type="BioCyc" id="EcoCyc:G7231-MONOMER"/>
<dbReference type="PRO" id="PR:P76515"/>
<dbReference type="Proteomes" id="UP000000625">
    <property type="component" value="Chromosome"/>
</dbReference>
<dbReference type="GO" id="GO:0006979">
    <property type="term" value="P:response to oxidative stress"/>
    <property type="evidence" value="ECO:0000315"/>
    <property type="project" value="EcoCyc"/>
</dbReference>